<reference key="1">
    <citation type="journal article" date="2005" name="J. Bacteriol.">
        <title>Genomic sequence of an otitis media isolate of nontypeable Haemophilus influenzae: comparative study with H. influenzae serotype d, strain KW20.</title>
        <authorList>
            <person name="Harrison A."/>
            <person name="Dyer D.W."/>
            <person name="Gillaspy A."/>
            <person name="Ray W.C."/>
            <person name="Mungur R."/>
            <person name="Carson M.B."/>
            <person name="Zhong H."/>
            <person name="Gipson J."/>
            <person name="Gipson M."/>
            <person name="Johnson L.S."/>
            <person name="Lewis L."/>
            <person name="Bakaletz L.O."/>
            <person name="Munson R.S. Jr."/>
        </authorList>
    </citation>
    <scope>NUCLEOTIDE SEQUENCE [LARGE SCALE GENOMIC DNA]</scope>
    <source>
        <strain>86-028NP</strain>
    </source>
</reference>
<keyword id="KW-0732">Signal</keyword>
<proteinExistence type="inferred from homology"/>
<evidence type="ECO:0000255" key="1">
    <source>
        <dbReference type="HAMAP-Rule" id="MF_00789"/>
    </source>
</evidence>
<name>Y1987_HAEI8</name>
<dbReference type="EMBL" id="CP000057">
    <property type="protein sequence ID" value="AAX88737.1"/>
    <property type="molecule type" value="Genomic_DNA"/>
</dbReference>
<dbReference type="RefSeq" id="WP_011272746.1">
    <property type="nucleotide sequence ID" value="NC_007146.2"/>
</dbReference>
<dbReference type="KEGG" id="hit:NTHI1987"/>
<dbReference type="HOGENOM" id="CLU_073782_2_0_6"/>
<dbReference type="Proteomes" id="UP000002525">
    <property type="component" value="Chromosome"/>
</dbReference>
<dbReference type="HAMAP" id="MF_00789">
    <property type="entry name" value="UPF0319"/>
    <property type="match status" value="1"/>
</dbReference>
<dbReference type="InterPro" id="IPR018635">
    <property type="entry name" value="UPF0319"/>
</dbReference>
<dbReference type="NCBIfam" id="NF002516">
    <property type="entry name" value="PRK01904.1"/>
    <property type="match status" value="1"/>
</dbReference>
<dbReference type="PANTHER" id="PTHR38108">
    <property type="entry name" value="UPF0319 PROTEIN YCCT"/>
    <property type="match status" value="1"/>
</dbReference>
<dbReference type="PANTHER" id="PTHR38108:SF1">
    <property type="entry name" value="UPF0319 PROTEIN YCCT"/>
    <property type="match status" value="1"/>
</dbReference>
<dbReference type="Pfam" id="PF09829">
    <property type="entry name" value="DUF2057"/>
    <property type="match status" value="1"/>
</dbReference>
<sequence length="221" mass="23445">MKLRAVVLGLATLCTSTATFAGMVSTSSNLEFLAIDGQKASKSLGKAKTFTVDDTQSHQVVVRLNEIVGSGSNQSLFESNPVIVTFQGNAEDLVISAPAIRNLDSGDKFNQMPNITVKTKSGNAISAKVDVLKQEGLFPSGNVLNDLAEYNASGAAASVSKFTATTSANSMVAVPAGNAKANKGKVVVQGENVAEQQLQYWFQQADKETQTRFLNWAKSHK</sequence>
<gene>
    <name type="ordered locus">NTHI1987</name>
</gene>
<comment type="similarity">
    <text evidence="1">Belongs to the UPF0319 family.</text>
</comment>
<feature type="signal peptide" evidence="1">
    <location>
        <begin position="1"/>
        <end position="21"/>
    </location>
</feature>
<feature type="chain" id="PRO_1000046901" description="UPF0319 protein NTHI1987">
    <location>
        <begin position="22"/>
        <end position="221"/>
    </location>
</feature>
<accession>Q4QJR0</accession>
<protein>
    <recommendedName>
        <fullName evidence="1">UPF0319 protein NTHI1987</fullName>
    </recommendedName>
</protein>
<organism>
    <name type="scientific">Haemophilus influenzae (strain 86-028NP)</name>
    <dbReference type="NCBI Taxonomy" id="281310"/>
    <lineage>
        <taxon>Bacteria</taxon>
        <taxon>Pseudomonadati</taxon>
        <taxon>Pseudomonadota</taxon>
        <taxon>Gammaproteobacteria</taxon>
        <taxon>Pasteurellales</taxon>
        <taxon>Pasteurellaceae</taxon>
        <taxon>Haemophilus</taxon>
    </lineage>
</organism>